<feature type="chain" id="PRO_0000146393" description="Small ribosomal subunit protein uS12cz/uS12cy">
    <location>
        <begin position="1"/>
        <end position="123"/>
    </location>
</feature>
<proteinExistence type="inferred from homology"/>
<organism>
    <name type="scientific">Atropa belladonna</name>
    <name type="common">Belladonna</name>
    <name type="synonym">Deadly nightshade</name>
    <dbReference type="NCBI Taxonomy" id="33113"/>
    <lineage>
        <taxon>Eukaryota</taxon>
        <taxon>Viridiplantae</taxon>
        <taxon>Streptophyta</taxon>
        <taxon>Embryophyta</taxon>
        <taxon>Tracheophyta</taxon>
        <taxon>Spermatophyta</taxon>
        <taxon>Magnoliopsida</taxon>
        <taxon>eudicotyledons</taxon>
        <taxon>Gunneridae</taxon>
        <taxon>Pentapetalae</taxon>
        <taxon>asterids</taxon>
        <taxon>lamiids</taxon>
        <taxon>Solanales</taxon>
        <taxon>Solanaceae</taxon>
        <taxon>Solanoideae</taxon>
        <taxon>Hyoscyameae</taxon>
        <taxon>Atropa</taxon>
    </lineage>
</organism>
<dbReference type="EMBL" id="AJ316582">
    <property type="protein sequence ID" value="CAC88068.1"/>
    <property type="molecule type" value="Genomic_DNA"/>
</dbReference>
<dbReference type="EMBL" id="AJ316582">
    <property type="protein sequence ID" value="CAC88091.1"/>
    <property type="molecule type" value="Genomic_DNA"/>
</dbReference>
<dbReference type="SMR" id="Q8RUK6"/>
<dbReference type="GO" id="GO:0009507">
    <property type="term" value="C:chloroplast"/>
    <property type="evidence" value="ECO:0007669"/>
    <property type="project" value="UniProtKB-SubCell"/>
</dbReference>
<dbReference type="GO" id="GO:0015935">
    <property type="term" value="C:small ribosomal subunit"/>
    <property type="evidence" value="ECO:0007669"/>
    <property type="project" value="InterPro"/>
</dbReference>
<dbReference type="GO" id="GO:0019843">
    <property type="term" value="F:rRNA binding"/>
    <property type="evidence" value="ECO:0007669"/>
    <property type="project" value="UniProtKB-UniRule"/>
</dbReference>
<dbReference type="GO" id="GO:0003735">
    <property type="term" value="F:structural constituent of ribosome"/>
    <property type="evidence" value="ECO:0007669"/>
    <property type="project" value="InterPro"/>
</dbReference>
<dbReference type="GO" id="GO:0006412">
    <property type="term" value="P:translation"/>
    <property type="evidence" value="ECO:0007669"/>
    <property type="project" value="UniProtKB-UniRule"/>
</dbReference>
<dbReference type="CDD" id="cd03368">
    <property type="entry name" value="Ribosomal_S12"/>
    <property type="match status" value="1"/>
</dbReference>
<dbReference type="FunFam" id="2.40.50.140:FF:000008">
    <property type="entry name" value="30S ribosomal protein S12, chloroplastic"/>
    <property type="match status" value="1"/>
</dbReference>
<dbReference type="Gene3D" id="2.40.50.140">
    <property type="entry name" value="Nucleic acid-binding proteins"/>
    <property type="match status" value="1"/>
</dbReference>
<dbReference type="HAMAP" id="MF_00403_B">
    <property type="entry name" value="Ribosomal_uS12_B"/>
    <property type="match status" value="1"/>
</dbReference>
<dbReference type="InterPro" id="IPR012340">
    <property type="entry name" value="NA-bd_OB-fold"/>
</dbReference>
<dbReference type="InterPro" id="IPR006032">
    <property type="entry name" value="Ribosomal_uS12"/>
</dbReference>
<dbReference type="InterPro" id="IPR005679">
    <property type="entry name" value="Ribosomal_uS12_bac"/>
</dbReference>
<dbReference type="NCBIfam" id="TIGR00981">
    <property type="entry name" value="rpsL_bact"/>
    <property type="match status" value="1"/>
</dbReference>
<dbReference type="PANTHER" id="PTHR11652">
    <property type="entry name" value="30S RIBOSOMAL PROTEIN S12 FAMILY MEMBER"/>
    <property type="match status" value="1"/>
</dbReference>
<dbReference type="Pfam" id="PF00164">
    <property type="entry name" value="Ribosom_S12_S23"/>
    <property type="match status" value="1"/>
</dbReference>
<dbReference type="PIRSF" id="PIRSF002133">
    <property type="entry name" value="Ribosomal_S12/S23"/>
    <property type="match status" value="1"/>
</dbReference>
<dbReference type="PRINTS" id="PR01034">
    <property type="entry name" value="RIBOSOMALS12"/>
</dbReference>
<dbReference type="SUPFAM" id="SSF50249">
    <property type="entry name" value="Nucleic acid-binding proteins"/>
    <property type="match status" value="1"/>
</dbReference>
<dbReference type="PROSITE" id="PS00055">
    <property type="entry name" value="RIBOSOMAL_S12"/>
    <property type="match status" value="1"/>
</dbReference>
<evidence type="ECO:0000250" key="1"/>
<evidence type="ECO:0000255" key="2">
    <source>
        <dbReference type="HAMAP-Rule" id="MF_00403"/>
    </source>
</evidence>
<evidence type="ECO:0000305" key="3"/>
<gene>
    <name type="primary">rps12-A</name>
</gene>
<gene>
    <name type="primary">rps12-B</name>
</gene>
<keyword id="KW-0150">Chloroplast</keyword>
<keyword id="KW-0934">Plastid</keyword>
<keyword id="KW-0687">Ribonucleoprotein</keyword>
<keyword id="KW-0689">Ribosomal protein</keyword>
<keyword id="KW-0694">RNA-binding</keyword>
<keyword id="KW-0699">rRNA-binding</keyword>
<reference key="1">
    <citation type="journal article" date="2002" name="Mol. Biol. Evol.">
        <title>The plastid chromosome of Atropa belladonna and its comparison with that of Nicotiana tabacum: the role of RNA editing in generating divergence in the process of plant speciation.</title>
        <authorList>
            <person name="Schmitz-Linneweber C."/>
            <person name="Regel R."/>
            <person name="Du T.G."/>
            <person name="Hupfer H."/>
            <person name="Herrmann R.G."/>
            <person name="Maier R.M."/>
        </authorList>
    </citation>
    <scope>NUCLEOTIDE SEQUENCE [LARGE SCALE GENOMIC DNA]</scope>
    <source>
        <strain>cv. Ab5p(kan)</strain>
    </source>
</reference>
<geneLocation type="chloroplast"/>
<name>RR12_ATRBE</name>
<comment type="function">
    <text evidence="1">With S4 and S5 plays an important role in translational accuracy. Located at the interface of the 30S and 50S subunits (By similarity).</text>
</comment>
<comment type="subunit">
    <text evidence="1">Part of the 30S ribosomal subunit.</text>
</comment>
<comment type="subcellular location">
    <subcellularLocation>
        <location>Plastid</location>
        <location>Chloroplast</location>
    </subcellularLocation>
</comment>
<comment type="similarity">
    <text evidence="3">Belongs to the universal ribosomal protein uS12 family.</text>
</comment>
<protein>
    <recommendedName>
        <fullName evidence="2">Small ribosomal subunit protein uS12cz/uS12cy</fullName>
    </recommendedName>
    <alternativeName>
        <fullName evidence="3">30S ribosomal protein S12, chloroplastic</fullName>
    </alternativeName>
</protein>
<sequence length="123" mass="13750">MPTINQLIRNTRQPIRNVTKSPALRGCPQRRGTCTRVYTITPKKPNSALRKVARVRLTSGFEITAYIPGIGHNLQEHSVVLVRGGRVKDLPGVRYHIVRGTLDAVGVKDRQQGRSKYGVKKPK</sequence>
<accession>Q8RUK6</accession>